<gene>
    <name evidence="1" type="primary">rpsH</name>
    <name type="ordered locus">APL_1773</name>
</gene>
<comment type="function">
    <text evidence="1">One of the primary rRNA binding proteins, it binds directly to 16S rRNA central domain where it helps coordinate assembly of the platform of the 30S subunit.</text>
</comment>
<comment type="subunit">
    <text evidence="1">Part of the 30S ribosomal subunit. Contacts proteins S5 and S12.</text>
</comment>
<comment type="similarity">
    <text evidence="1">Belongs to the universal ribosomal protein uS8 family.</text>
</comment>
<reference key="1">
    <citation type="journal article" date="2008" name="J. Bacteriol.">
        <title>The complete genome sequence of Actinobacillus pleuropneumoniae L20 (serotype 5b).</title>
        <authorList>
            <person name="Foote S.J."/>
            <person name="Bosse J.T."/>
            <person name="Bouevitch A.B."/>
            <person name="Langford P.R."/>
            <person name="Young N.M."/>
            <person name="Nash J.H.E."/>
        </authorList>
    </citation>
    <scope>NUCLEOTIDE SEQUENCE [LARGE SCALE GENOMIC DNA]</scope>
    <source>
        <strain>L20</strain>
    </source>
</reference>
<proteinExistence type="inferred from homology"/>
<evidence type="ECO:0000255" key="1">
    <source>
        <dbReference type="HAMAP-Rule" id="MF_01302"/>
    </source>
</evidence>
<evidence type="ECO:0000305" key="2"/>
<accession>A3N371</accession>
<organism>
    <name type="scientific">Actinobacillus pleuropneumoniae serotype 5b (strain L20)</name>
    <dbReference type="NCBI Taxonomy" id="416269"/>
    <lineage>
        <taxon>Bacteria</taxon>
        <taxon>Pseudomonadati</taxon>
        <taxon>Pseudomonadota</taxon>
        <taxon>Gammaproteobacteria</taxon>
        <taxon>Pasteurellales</taxon>
        <taxon>Pasteurellaceae</taxon>
        <taxon>Actinobacillus</taxon>
    </lineage>
</organism>
<sequence length="130" mass="14098">MSMQDPIADMLTRIRNGQAANKVAISMPSSKLKVAIASVLAEEGYVESFKIVEGSKPELEITLKYFQNKPVVESIQRVSRPGLRIYKRKDELPKVMGGLGIAVVSTSKGVMTDRAARQAGLGGEIICYVA</sequence>
<keyword id="KW-1185">Reference proteome</keyword>
<keyword id="KW-0687">Ribonucleoprotein</keyword>
<keyword id="KW-0689">Ribosomal protein</keyword>
<keyword id="KW-0694">RNA-binding</keyword>
<keyword id="KW-0699">rRNA-binding</keyword>
<protein>
    <recommendedName>
        <fullName evidence="1">Small ribosomal subunit protein uS8</fullName>
    </recommendedName>
    <alternativeName>
        <fullName evidence="2">30S ribosomal protein S8</fullName>
    </alternativeName>
</protein>
<dbReference type="EMBL" id="CP000569">
    <property type="protein sequence ID" value="ABN74857.1"/>
    <property type="molecule type" value="Genomic_DNA"/>
</dbReference>
<dbReference type="RefSeq" id="WP_005619408.1">
    <property type="nucleotide sequence ID" value="NC_009053.1"/>
</dbReference>
<dbReference type="SMR" id="A3N371"/>
<dbReference type="STRING" id="416269.APL_1773"/>
<dbReference type="EnsemblBacteria" id="ABN74857">
    <property type="protein sequence ID" value="ABN74857"/>
    <property type="gene ID" value="APL_1773"/>
</dbReference>
<dbReference type="GeneID" id="92743641"/>
<dbReference type="KEGG" id="apl:APL_1773"/>
<dbReference type="eggNOG" id="COG0096">
    <property type="taxonomic scope" value="Bacteria"/>
</dbReference>
<dbReference type="HOGENOM" id="CLU_098428_0_0_6"/>
<dbReference type="Proteomes" id="UP000001432">
    <property type="component" value="Chromosome"/>
</dbReference>
<dbReference type="GO" id="GO:1990904">
    <property type="term" value="C:ribonucleoprotein complex"/>
    <property type="evidence" value="ECO:0007669"/>
    <property type="project" value="UniProtKB-KW"/>
</dbReference>
<dbReference type="GO" id="GO:0005840">
    <property type="term" value="C:ribosome"/>
    <property type="evidence" value="ECO:0007669"/>
    <property type="project" value="UniProtKB-KW"/>
</dbReference>
<dbReference type="GO" id="GO:0019843">
    <property type="term" value="F:rRNA binding"/>
    <property type="evidence" value="ECO:0007669"/>
    <property type="project" value="UniProtKB-UniRule"/>
</dbReference>
<dbReference type="GO" id="GO:0003735">
    <property type="term" value="F:structural constituent of ribosome"/>
    <property type="evidence" value="ECO:0007669"/>
    <property type="project" value="InterPro"/>
</dbReference>
<dbReference type="GO" id="GO:0006412">
    <property type="term" value="P:translation"/>
    <property type="evidence" value="ECO:0007669"/>
    <property type="project" value="UniProtKB-UniRule"/>
</dbReference>
<dbReference type="FunFam" id="3.30.1370.30:FF:000003">
    <property type="entry name" value="30S ribosomal protein S8"/>
    <property type="match status" value="1"/>
</dbReference>
<dbReference type="FunFam" id="3.30.1490.10:FF:000001">
    <property type="entry name" value="30S ribosomal protein S8"/>
    <property type="match status" value="1"/>
</dbReference>
<dbReference type="Gene3D" id="3.30.1370.30">
    <property type="match status" value="1"/>
</dbReference>
<dbReference type="Gene3D" id="3.30.1490.10">
    <property type="match status" value="1"/>
</dbReference>
<dbReference type="HAMAP" id="MF_01302_B">
    <property type="entry name" value="Ribosomal_uS8_B"/>
    <property type="match status" value="1"/>
</dbReference>
<dbReference type="InterPro" id="IPR000630">
    <property type="entry name" value="Ribosomal_uS8"/>
</dbReference>
<dbReference type="InterPro" id="IPR047863">
    <property type="entry name" value="Ribosomal_uS8_CS"/>
</dbReference>
<dbReference type="InterPro" id="IPR035987">
    <property type="entry name" value="Ribosomal_uS8_sf"/>
</dbReference>
<dbReference type="NCBIfam" id="NF001109">
    <property type="entry name" value="PRK00136.1"/>
    <property type="match status" value="1"/>
</dbReference>
<dbReference type="PANTHER" id="PTHR11758">
    <property type="entry name" value="40S RIBOSOMAL PROTEIN S15A"/>
    <property type="match status" value="1"/>
</dbReference>
<dbReference type="Pfam" id="PF00410">
    <property type="entry name" value="Ribosomal_S8"/>
    <property type="match status" value="1"/>
</dbReference>
<dbReference type="SUPFAM" id="SSF56047">
    <property type="entry name" value="Ribosomal protein S8"/>
    <property type="match status" value="1"/>
</dbReference>
<dbReference type="PROSITE" id="PS00053">
    <property type="entry name" value="RIBOSOMAL_S8"/>
    <property type="match status" value="1"/>
</dbReference>
<name>RS8_ACTP2</name>
<feature type="chain" id="PRO_0000305733" description="Small ribosomal subunit protein uS8">
    <location>
        <begin position="1"/>
        <end position="130"/>
    </location>
</feature>